<accession>Q91G67</accession>
<reference key="1">
    <citation type="journal article" date="2001" name="Virology">
        <title>Analysis of the first complete DNA sequence of an invertebrate iridovirus: coding strategy of the genome of Chilo iridescent virus.</title>
        <authorList>
            <person name="Jakob N.J."/>
            <person name="Mueller K."/>
            <person name="Bahr U."/>
            <person name="Darai G."/>
        </authorList>
    </citation>
    <scope>NUCLEOTIDE SEQUENCE [LARGE SCALE GENOMIC DNA]</scope>
</reference>
<reference key="2">
    <citation type="journal article" date="2007" name="Virol. J.">
        <title>Comparative genomic analysis of the family Iridoviridae: re-annotating and defining the core set of iridovirus genes.</title>
        <authorList>
            <person name="Eaton H.E."/>
            <person name="Metcalf J."/>
            <person name="Penny E."/>
            <person name="Tcherepanov V."/>
            <person name="Upton C."/>
            <person name="Brunetti C.R."/>
        </authorList>
    </citation>
    <scope>GENOME REANNOTATION</scope>
</reference>
<gene>
    <name type="ORF">IIV6-029R</name>
</gene>
<organismHost>
    <name type="scientific">Acheta domesticus</name>
    <name type="common">House cricket</name>
    <dbReference type="NCBI Taxonomy" id="6997"/>
</organismHost>
<organismHost>
    <name type="scientific">Chilo suppressalis</name>
    <name type="common">Asiatic rice borer moth</name>
    <dbReference type="NCBI Taxonomy" id="168631"/>
</organismHost>
<organismHost>
    <name type="scientific">Gryllus bimaculatus</name>
    <name type="common">Two-spotted cricket</name>
    <dbReference type="NCBI Taxonomy" id="6999"/>
</organismHost>
<organismHost>
    <name type="scientific">Gryllus campestris</name>
    <dbReference type="NCBI Taxonomy" id="58607"/>
</organismHost>
<organismHost>
    <name type="scientific">Spodoptera frugiperda</name>
    <name type="common">Fall armyworm</name>
    <dbReference type="NCBI Taxonomy" id="7108"/>
</organismHost>
<proteinExistence type="predicted"/>
<sequence length="129" mass="15520">MVERLGIAVEDRSPKLRKQAIRERFVLFKKNTERVEKYEYYAIRGQSIYINGRLSKLQSERYPKMIILLDIFCQPNPRNLFLRFKERIDGKSEWENNFTYAGNNIGCTKEMESDMIRIFNELDDEKRDV</sequence>
<dbReference type="EMBL" id="AF303741">
    <property type="protein sequence ID" value="AAK81965.1"/>
    <property type="molecule type" value="Genomic_DNA"/>
</dbReference>
<dbReference type="RefSeq" id="NP_149492.1">
    <property type="nucleotide sequence ID" value="NC_003038.1"/>
</dbReference>
<dbReference type="KEGG" id="vg:1733149"/>
<dbReference type="Proteomes" id="UP000001359">
    <property type="component" value="Genome"/>
</dbReference>
<dbReference type="InterPro" id="IPR022549">
    <property type="entry name" value="DUF3627"/>
</dbReference>
<dbReference type="Pfam" id="PF12299">
    <property type="entry name" value="DUF3627"/>
    <property type="match status" value="1"/>
</dbReference>
<feature type="chain" id="PRO_0000377963" description="Uncharacterized protein 029R">
    <location>
        <begin position="1"/>
        <end position="129"/>
    </location>
</feature>
<organism>
    <name type="scientific">Invertebrate iridescent virus 6</name>
    <name type="common">IIV-6</name>
    <name type="synonym">Chilo iridescent virus</name>
    <dbReference type="NCBI Taxonomy" id="176652"/>
    <lineage>
        <taxon>Viruses</taxon>
        <taxon>Varidnaviria</taxon>
        <taxon>Bamfordvirae</taxon>
        <taxon>Nucleocytoviricota</taxon>
        <taxon>Megaviricetes</taxon>
        <taxon>Pimascovirales</taxon>
        <taxon>Iridoviridae</taxon>
        <taxon>Betairidovirinae</taxon>
        <taxon>Iridovirus</taxon>
    </lineage>
</organism>
<protein>
    <recommendedName>
        <fullName>Uncharacterized protein 029R</fullName>
    </recommendedName>
</protein>
<keyword id="KW-1185">Reference proteome</keyword>
<name>029R_IIV6</name>